<protein>
    <recommendedName>
        <fullName evidence="1">ATP synthase subunit delta</fullName>
    </recommendedName>
    <alternativeName>
        <fullName evidence="1">ATP synthase F(1) sector subunit delta</fullName>
    </alternativeName>
    <alternativeName>
        <fullName evidence="1">F-type ATPase subunit delta</fullName>
        <shortName evidence="1">F-ATPase subunit delta</shortName>
    </alternativeName>
</protein>
<feature type="chain" id="PRO_1000184801" description="ATP synthase subunit delta">
    <location>
        <begin position="1"/>
        <end position="179"/>
    </location>
</feature>
<comment type="function">
    <text evidence="1">F(1)F(0) ATP synthase produces ATP from ADP in the presence of a proton or sodium gradient. F-type ATPases consist of two structural domains, F(1) containing the extramembraneous catalytic core and F(0) containing the membrane proton channel, linked together by a central stalk and a peripheral stalk. During catalysis, ATP synthesis in the catalytic domain of F(1) is coupled via a rotary mechanism of the central stalk subunits to proton translocation.</text>
</comment>
<comment type="function">
    <text evidence="1">This protein is part of the stalk that links CF(0) to CF(1). It either transmits conformational changes from CF(0) to CF(1) or is implicated in proton conduction.</text>
</comment>
<comment type="subunit">
    <text evidence="1">F-type ATPases have 2 components, F(1) - the catalytic core - and F(0) - the membrane proton channel. F(1) has five subunits: alpha(3), beta(3), gamma(1), delta(1), epsilon(1). F(0) has three main subunits: a(1), b(2) and c(10-14). The alpha and beta chains form an alternating ring which encloses part of the gamma chain. F(1) is attached to F(0) by a central stalk formed by the gamma and epsilon chains, while a peripheral stalk is formed by the delta and b chains.</text>
</comment>
<comment type="subcellular location">
    <subcellularLocation>
        <location evidence="1">Cell membrane</location>
        <topology evidence="1">Peripheral membrane protein</topology>
    </subcellularLocation>
</comment>
<comment type="similarity">
    <text evidence="1">Belongs to the ATPase delta chain family.</text>
</comment>
<organism>
    <name type="scientific">Staphylococcus aureus (strain Newman)</name>
    <dbReference type="NCBI Taxonomy" id="426430"/>
    <lineage>
        <taxon>Bacteria</taxon>
        <taxon>Bacillati</taxon>
        <taxon>Bacillota</taxon>
        <taxon>Bacilli</taxon>
        <taxon>Bacillales</taxon>
        <taxon>Staphylococcaceae</taxon>
        <taxon>Staphylococcus</taxon>
    </lineage>
</organism>
<accession>A6QIV0</accession>
<keyword id="KW-0066">ATP synthesis</keyword>
<keyword id="KW-1003">Cell membrane</keyword>
<keyword id="KW-0139">CF(1)</keyword>
<keyword id="KW-0375">Hydrogen ion transport</keyword>
<keyword id="KW-0406">Ion transport</keyword>
<keyword id="KW-0472">Membrane</keyword>
<keyword id="KW-0813">Transport</keyword>
<gene>
    <name evidence="1" type="primary">atpH</name>
    <name type="ordered locus">NWMN_2010</name>
</gene>
<proteinExistence type="inferred from homology"/>
<reference key="1">
    <citation type="journal article" date="2008" name="J. Bacteriol.">
        <title>Genome sequence of Staphylococcus aureus strain Newman and comparative analysis of staphylococcal genomes: polymorphism and evolution of two major pathogenicity islands.</title>
        <authorList>
            <person name="Baba T."/>
            <person name="Bae T."/>
            <person name="Schneewind O."/>
            <person name="Takeuchi F."/>
            <person name="Hiramatsu K."/>
        </authorList>
    </citation>
    <scope>NUCLEOTIDE SEQUENCE [LARGE SCALE GENOMIC DNA]</scope>
    <source>
        <strain>Newman</strain>
    </source>
</reference>
<name>ATPD_STAAE</name>
<sequence>MVKVANKYAKALFDVSLDTNNLETINEELTVINEAVKDKIEQLRMVDSNPTQTAEQRRELINGVFTDINPYIKNMMYVLADNRHISLIADVFKAFQSLYNGHYNQDFATIESTYELSQEELDKIVKLVTQQTKLSKVIVDTKINPDLIGGFRVKVGTTVLDGSVRNDLVQLQRKFRRVN</sequence>
<evidence type="ECO:0000255" key="1">
    <source>
        <dbReference type="HAMAP-Rule" id="MF_01416"/>
    </source>
</evidence>
<dbReference type="EMBL" id="AP009351">
    <property type="protein sequence ID" value="BAF68282.1"/>
    <property type="molecule type" value="Genomic_DNA"/>
</dbReference>
<dbReference type="RefSeq" id="WP_000241351.1">
    <property type="nucleotide sequence ID" value="NZ_JBBIAE010000008.1"/>
</dbReference>
<dbReference type="SMR" id="A6QIV0"/>
<dbReference type="KEGG" id="sae:NWMN_2010"/>
<dbReference type="HOGENOM" id="CLU_085114_4_1_9"/>
<dbReference type="Proteomes" id="UP000006386">
    <property type="component" value="Chromosome"/>
</dbReference>
<dbReference type="GO" id="GO:0005886">
    <property type="term" value="C:plasma membrane"/>
    <property type="evidence" value="ECO:0007669"/>
    <property type="project" value="UniProtKB-SubCell"/>
</dbReference>
<dbReference type="GO" id="GO:0045259">
    <property type="term" value="C:proton-transporting ATP synthase complex"/>
    <property type="evidence" value="ECO:0007669"/>
    <property type="project" value="UniProtKB-KW"/>
</dbReference>
<dbReference type="GO" id="GO:0046933">
    <property type="term" value="F:proton-transporting ATP synthase activity, rotational mechanism"/>
    <property type="evidence" value="ECO:0007669"/>
    <property type="project" value="UniProtKB-UniRule"/>
</dbReference>
<dbReference type="Gene3D" id="1.10.520.20">
    <property type="entry name" value="N-terminal domain of the delta subunit of the F1F0-ATP synthase"/>
    <property type="match status" value="1"/>
</dbReference>
<dbReference type="HAMAP" id="MF_01416">
    <property type="entry name" value="ATP_synth_delta_bact"/>
    <property type="match status" value="1"/>
</dbReference>
<dbReference type="InterPro" id="IPR026015">
    <property type="entry name" value="ATP_synth_OSCP/delta_N_sf"/>
</dbReference>
<dbReference type="InterPro" id="IPR020781">
    <property type="entry name" value="ATPase_OSCP/d_CS"/>
</dbReference>
<dbReference type="InterPro" id="IPR000711">
    <property type="entry name" value="ATPase_OSCP/dsu"/>
</dbReference>
<dbReference type="NCBIfam" id="TIGR01145">
    <property type="entry name" value="ATP_synt_delta"/>
    <property type="match status" value="1"/>
</dbReference>
<dbReference type="NCBIfam" id="NF004399">
    <property type="entry name" value="PRK05758.1-1"/>
    <property type="match status" value="1"/>
</dbReference>
<dbReference type="PANTHER" id="PTHR11910">
    <property type="entry name" value="ATP SYNTHASE DELTA CHAIN"/>
    <property type="match status" value="1"/>
</dbReference>
<dbReference type="Pfam" id="PF00213">
    <property type="entry name" value="OSCP"/>
    <property type="match status" value="1"/>
</dbReference>
<dbReference type="PRINTS" id="PR00125">
    <property type="entry name" value="ATPASEDELTA"/>
</dbReference>
<dbReference type="SUPFAM" id="SSF47928">
    <property type="entry name" value="N-terminal domain of the delta subunit of the F1F0-ATP synthase"/>
    <property type="match status" value="1"/>
</dbReference>
<dbReference type="PROSITE" id="PS00389">
    <property type="entry name" value="ATPASE_DELTA"/>
    <property type="match status" value="1"/>
</dbReference>